<gene>
    <name evidence="6 10" type="primary">Cyp7a1</name>
    <name type="synonym">Cyp7</name>
</gene>
<sequence length="503" mass="57262">MMSISLIWGIAVVVSCCIWFIIGIRRRKVGEPPLDNGLIPYLGCALKFGSNPLEFLRAKQRKHGHVFTCKLMGKYVHFITNSLSYHKVLCHGKYFDWKKFHYTTSAKAFGHRSIDPSDGNTTENINKTFNKTLQGDALCSLSEAMMQNLQSVMRPPGLPKSKSAVWVTEGMYAFCYRVMFEAGYLTLFGKDISKTDSQRAFIQNNLDSFKQFDQVFPALVAGVPIHLFKTAHKARERLAESLKHKNLYMRDQVSELIRLRMFLNDTLSTFDDMEKAKTHLVILWASQANTIPATFWSLFQMIRSPEAMKAASEEVNGALQSAGQELSSGGNAIYLDQEQLNNLPVLDSIIKEALRLSSASLNIRTAKEDFTLHLEDGSYNIRKDDIIALYPQLMHLDPEIYPDPLTFKYDRYLDESGKAKTTFYRNGNKLKYFYMPFGSGATICPGRLFAVQEIKQFLILMLSYFELELVESHTKCPPLDQSRAGLGILPPLNDIEFKYKLKH</sequence>
<accession>Q64505</accession>
<accession>Q8BFR7</accession>
<evidence type="ECO:0000250" key="1">
    <source>
        <dbReference type="UniProtKB" id="P18125"/>
    </source>
</evidence>
<evidence type="ECO:0000250" key="2">
    <source>
        <dbReference type="UniProtKB" id="P22680"/>
    </source>
</evidence>
<evidence type="ECO:0000255" key="3"/>
<evidence type="ECO:0000269" key="4">
    <source>
    </source>
</evidence>
<evidence type="ECO:0000269" key="5">
    <source>
    </source>
</evidence>
<evidence type="ECO:0000303" key="6">
    <source>
    </source>
</evidence>
<evidence type="ECO:0000303" key="7">
    <source>
    </source>
</evidence>
<evidence type="ECO:0000305" key="8"/>
<evidence type="ECO:0000305" key="9">
    <source>
    </source>
</evidence>
<evidence type="ECO:0000312" key="10">
    <source>
        <dbReference type="MGI" id="MGI:106091"/>
    </source>
</evidence>
<proteinExistence type="evidence at transcript level"/>
<reference key="1">
    <citation type="journal article" date="1994" name="Genomics">
        <title>Structure of the mouse cholesterol 7 alpha-hydroxylase gene.</title>
        <authorList>
            <person name="Tzung K.W."/>
            <person name="Ishimura-Oka K."/>
            <person name="Kihara S."/>
            <person name="Oka K."/>
            <person name="Chan L."/>
        </authorList>
    </citation>
    <scope>NUCLEOTIDE SEQUENCE [GENOMIC DNA]</scope>
</reference>
<reference key="2">
    <citation type="journal article" date="2005" name="Science">
        <title>The transcriptional landscape of the mammalian genome.</title>
        <authorList>
            <person name="Carninci P."/>
            <person name="Kasukawa T."/>
            <person name="Katayama S."/>
            <person name="Gough J."/>
            <person name="Frith M.C."/>
            <person name="Maeda N."/>
            <person name="Oyama R."/>
            <person name="Ravasi T."/>
            <person name="Lenhard B."/>
            <person name="Wells C."/>
            <person name="Kodzius R."/>
            <person name="Shimokawa K."/>
            <person name="Bajic V.B."/>
            <person name="Brenner S.E."/>
            <person name="Batalov S."/>
            <person name="Forrest A.R."/>
            <person name="Zavolan M."/>
            <person name="Davis M.J."/>
            <person name="Wilming L.G."/>
            <person name="Aidinis V."/>
            <person name="Allen J.E."/>
            <person name="Ambesi-Impiombato A."/>
            <person name="Apweiler R."/>
            <person name="Aturaliya R.N."/>
            <person name="Bailey T.L."/>
            <person name="Bansal M."/>
            <person name="Baxter L."/>
            <person name="Beisel K.W."/>
            <person name="Bersano T."/>
            <person name="Bono H."/>
            <person name="Chalk A.M."/>
            <person name="Chiu K.P."/>
            <person name="Choudhary V."/>
            <person name="Christoffels A."/>
            <person name="Clutterbuck D.R."/>
            <person name="Crowe M.L."/>
            <person name="Dalla E."/>
            <person name="Dalrymple B.P."/>
            <person name="de Bono B."/>
            <person name="Della Gatta G."/>
            <person name="di Bernardo D."/>
            <person name="Down T."/>
            <person name="Engstrom P."/>
            <person name="Fagiolini M."/>
            <person name="Faulkner G."/>
            <person name="Fletcher C.F."/>
            <person name="Fukushima T."/>
            <person name="Furuno M."/>
            <person name="Futaki S."/>
            <person name="Gariboldi M."/>
            <person name="Georgii-Hemming P."/>
            <person name="Gingeras T.R."/>
            <person name="Gojobori T."/>
            <person name="Green R.E."/>
            <person name="Gustincich S."/>
            <person name="Harbers M."/>
            <person name="Hayashi Y."/>
            <person name="Hensch T.K."/>
            <person name="Hirokawa N."/>
            <person name="Hill D."/>
            <person name="Huminiecki L."/>
            <person name="Iacono M."/>
            <person name="Ikeo K."/>
            <person name="Iwama A."/>
            <person name="Ishikawa T."/>
            <person name="Jakt M."/>
            <person name="Kanapin A."/>
            <person name="Katoh M."/>
            <person name="Kawasawa Y."/>
            <person name="Kelso J."/>
            <person name="Kitamura H."/>
            <person name="Kitano H."/>
            <person name="Kollias G."/>
            <person name="Krishnan S.P."/>
            <person name="Kruger A."/>
            <person name="Kummerfeld S.K."/>
            <person name="Kurochkin I.V."/>
            <person name="Lareau L.F."/>
            <person name="Lazarevic D."/>
            <person name="Lipovich L."/>
            <person name="Liu J."/>
            <person name="Liuni S."/>
            <person name="McWilliam S."/>
            <person name="Madan Babu M."/>
            <person name="Madera M."/>
            <person name="Marchionni L."/>
            <person name="Matsuda H."/>
            <person name="Matsuzawa S."/>
            <person name="Miki H."/>
            <person name="Mignone F."/>
            <person name="Miyake S."/>
            <person name="Morris K."/>
            <person name="Mottagui-Tabar S."/>
            <person name="Mulder N."/>
            <person name="Nakano N."/>
            <person name="Nakauchi H."/>
            <person name="Ng P."/>
            <person name="Nilsson R."/>
            <person name="Nishiguchi S."/>
            <person name="Nishikawa S."/>
            <person name="Nori F."/>
            <person name="Ohara O."/>
            <person name="Okazaki Y."/>
            <person name="Orlando V."/>
            <person name="Pang K.C."/>
            <person name="Pavan W.J."/>
            <person name="Pavesi G."/>
            <person name="Pesole G."/>
            <person name="Petrovsky N."/>
            <person name="Piazza S."/>
            <person name="Reed J."/>
            <person name="Reid J.F."/>
            <person name="Ring B.Z."/>
            <person name="Ringwald M."/>
            <person name="Rost B."/>
            <person name="Ruan Y."/>
            <person name="Salzberg S.L."/>
            <person name="Sandelin A."/>
            <person name="Schneider C."/>
            <person name="Schoenbach C."/>
            <person name="Sekiguchi K."/>
            <person name="Semple C.A."/>
            <person name="Seno S."/>
            <person name="Sessa L."/>
            <person name="Sheng Y."/>
            <person name="Shibata Y."/>
            <person name="Shimada H."/>
            <person name="Shimada K."/>
            <person name="Silva D."/>
            <person name="Sinclair B."/>
            <person name="Sperling S."/>
            <person name="Stupka E."/>
            <person name="Sugiura K."/>
            <person name="Sultana R."/>
            <person name="Takenaka Y."/>
            <person name="Taki K."/>
            <person name="Tammoja K."/>
            <person name="Tan S.L."/>
            <person name="Tang S."/>
            <person name="Taylor M.S."/>
            <person name="Tegner J."/>
            <person name="Teichmann S.A."/>
            <person name="Ueda H.R."/>
            <person name="van Nimwegen E."/>
            <person name="Verardo R."/>
            <person name="Wei C.L."/>
            <person name="Yagi K."/>
            <person name="Yamanishi H."/>
            <person name="Zabarovsky E."/>
            <person name="Zhu S."/>
            <person name="Zimmer A."/>
            <person name="Hide W."/>
            <person name="Bult C."/>
            <person name="Grimmond S.M."/>
            <person name="Teasdale R.D."/>
            <person name="Liu E.T."/>
            <person name="Brusic V."/>
            <person name="Quackenbush J."/>
            <person name="Wahlestedt C."/>
            <person name="Mattick J.S."/>
            <person name="Hume D.A."/>
            <person name="Kai C."/>
            <person name="Sasaki D."/>
            <person name="Tomaru Y."/>
            <person name="Fukuda S."/>
            <person name="Kanamori-Katayama M."/>
            <person name="Suzuki M."/>
            <person name="Aoki J."/>
            <person name="Arakawa T."/>
            <person name="Iida J."/>
            <person name="Imamura K."/>
            <person name="Itoh M."/>
            <person name="Kato T."/>
            <person name="Kawaji H."/>
            <person name="Kawagashira N."/>
            <person name="Kawashima T."/>
            <person name="Kojima M."/>
            <person name="Kondo S."/>
            <person name="Konno H."/>
            <person name="Nakano K."/>
            <person name="Ninomiya N."/>
            <person name="Nishio T."/>
            <person name="Okada M."/>
            <person name="Plessy C."/>
            <person name="Shibata K."/>
            <person name="Shiraki T."/>
            <person name="Suzuki S."/>
            <person name="Tagami M."/>
            <person name="Waki K."/>
            <person name="Watahiki A."/>
            <person name="Okamura-Oho Y."/>
            <person name="Suzuki H."/>
            <person name="Kawai J."/>
            <person name="Hayashizaki Y."/>
        </authorList>
    </citation>
    <scope>NUCLEOTIDE SEQUENCE [LARGE SCALE MRNA]</scope>
    <source>
        <strain>C57BL/6J</strain>
        <tissue>Liver</tissue>
    </source>
</reference>
<reference key="3">
    <citation type="journal article" date="2009" name="PLoS Biol.">
        <title>Lineage-specific biology revealed by a finished genome assembly of the mouse.</title>
        <authorList>
            <person name="Church D.M."/>
            <person name="Goodstadt L."/>
            <person name="Hillier L.W."/>
            <person name="Zody M.C."/>
            <person name="Goldstein S."/>
            <person name="She X."/>
            <person name="Bult C.J."/>
            <person name="Agarwala R."/>
            <person name="Cherry J.L."/>
            <person name="DiCuccio M."/>
            <person name="Hlavina W."/>
            <person name="Kapustin Y."/>
            <person name="Meric P."/>
            <person name="Maglott D."/>
            <person name="Birtle Z."/>
            <person name="Marques A.C."/>
            <person name="Graves T."/>
            <person name="Zhou S."/>
            <person name="Teague B."/>
            <person name="Potamousis K."/>
            <person name="Churas C."/>
            <person name="Place M."/>
            <person name="Herschleb J."/>
            <person name="Runnheim R."/>
            <person name="Forrest D."/>
            <person name="Amos-Landgraf J."/>
            <person name="Schwartz D.C."/>
            <person name="Cheng Z."/>
            <person name="Lindblad-Toh K."/>
            <person name="Eichler E.E."/>
            <person name="Ponting C.P."/>
        </authorList>
    </citation>
    <scope>NUCLEOTIDE SEQUENCE [LARGE SCALE GENOMIC DNA]</scope>
    <source>
        <strain>C57BL/6J</strain>
    </source>
</reference>
<reference key="4">
    <citation type="journal article" date="2003" name="J. Biol. Chem.">
        <title>PGC-1alpha activates CYP7A1 and bile acid biosynthesis.</title>
        <authorList>
            <person name="Shin D.J."/>
            <person name="Campos J.A."/>
            <person name="Gil G."/>
            <person name="Osborne T.F."/>
        </authorList>
    </citation>
    <scope>FUNCTION</scope>
    <scope>INDUCTION BY FASTING</scope>
    <scope>PATHWAY</scope>
</reference>
<reference key="5">
    <citation type="journal article" date="2007" name="Mol. Endocrinol.">
        <title>Functional interaction of hepatic nuclear factor-4 and peroxisome proliferator-activated receptor-gamma coactivator 1alpha in CYP7A1 regulation is inhibited by a key lipogenic activator, sterol regulatory element-binding protein-1c.</title>
        <authorList>
            <person name="Ponugoti B."/>
            <person name="Fang S."/>
            <person name="Kemper J.K."/>
        </authorList>
    </citation>
    <scope>INDUCTION BY FASTING</scope>
</reference>
<keyword id="KW-0153">Cholesterol metabolism</keyword>
<keyword id="KW-0256">Endoplasmic reticulum</keyword>
<keyword id="KW-0349">Heme</keyword>
<keyword id="KW-0408">Iron</keyword>
<keyword id="KW-0443">Lipid metabolism</keyword>
<keyword id="KW-0472">Membrane</keyword>
<keyword id="KW-0479">Metal-binding</keyword>
<keyword id="KW-0492">Microsome</keyword>
<keyword id="KW-0503">Monooxygenase</keyword>
<keyword id="KW-0560">Oxidoreductase</keyword>
<keyword id="KW-1185">Reference proteome</keyword>
<keyword id="KW-0753">Steroid metabolism</keyword>
<keyword id="KW-1207">Sterol metabolism</keyword>
<keyword id="KW-0812">Transmembrane</keyword>
<keyword id="KW-1133">Transmembrane helix</keyword>
<protein>
    <recommendedName>
        <fullName evidence="2">Cytochrome P450 7A1</fullName>
    </recommendedName>
    <alternativeName>
        <fullName evidence="2">24-hydroxycholesterol 7-alpha-hydroxylase</fullName>
        <ecNumber evidence="2">1.14.14.26</ecNumber>
    </alternativeName>
    <alternativeName>
        <fullName>CYPVII</fullName>
    </alternativeName>
    <alternativeName>
        <fullName evidence="7">Cholesterol 7-alpha-hydroxylase</fullName>
    </alternativeName>
    <alternativeName>
        <fullName>Cholesterol 7-alpha-monooxygenase</fullName>
        <ecNumber evidence="1">1.14.14.23</ecNumber>
    </alternativeName>
</protein>
<dbReference type="EC" id="1.14.14.26" evidence="2"/>
<dbReference type="EC" id="1.14.14.23" evidence="1"/>
<dbReference type="EMBL" id="L23754">
    <property type="protein sequence ID" value="AAA68867.1"/>
    <property type="molecule type" value="Genomic_DNA"/>
</dbReference>
<dbReference type="EMBL" id="AK050020">
    <property type="protein sequence ID" value="BAC34033.1"/>
    <property type="molecule type" value="mRNA"/>
</dbReference>
<dbReference type="EMBL" id="AK050210">
    <property type="protein sequence ID" value="BAC34123.1"/>
    <property type="molecule type" value="mRNA"/>
</dbReference>
<dbReference type="EMBL" id="AK050220">
    <property type="protein sequence ID" value="BAC34131.1"/>
    <property type="molecule type" value="mRNA"/>
</dbReference>
<dbReference type="EMBL" id="AK050260">
    <property type="protein sequence ID" value="BAC34150.1"/>
    <property type="molecule type" value="mRNA"/>
</dbReference>
<dbReference type="EMBL" id="AL772306">
    <property type="status" value="NOT_ANNOTATED_CDS"/>
    <property type="molecule type" value="Genomic_DNA"/>
</dbReference>
<dbReference type="CCDS" id="CCDS17950.1"/>
<dbReference type="PIR" id="A54779">
    <property type="entry name" value="A54779"/>
</dbReference>
<dbReference type="RefSeq" id="NP_031850.2">
    <property type="nucleotide sequence ID" value="NM_007824.2"/>
</dbReference>
<dbReference type="RefSeq" id="XP_006537666.1">
    <property type="nucleotide sequence ID" value="XM_006537603.1"/>
</dbReference>
<dbReference type="SMR" id="Q64505"/>
<dbReference type="FunCoup" id="Q64505">
    <property type="interactions" value="792"/>
</dbReference>
<dbReference type="STRING" id="10090.ENSMUSP00000029905"/>
<dbReference type="ChEMBL" id="CHEMBL2212"/>
<dbReference type="iPTMnet" id="Q64505"/>
<dbReference type="PhosphoSitePlus" id="Q64505"/>
<dbReference type="SwissPalm" id="Q64505"/>
<dbReference type="jPOST" id="Q64505"/>
<dbReference type="PaxDb" id="10090-ENSMUSP00000029905"/>
<dbReference type="ProteomicsDB" id="284110"/>
<dbReference type="Antibodypedia" id="2602">
    <property type="antibodies" value="151 antibodies from 30 providers"/>
</dbReference>
<dbReference type="DNASU" id="13122"/>
<dbReference type="Ensembl" id="ENSMUST00000029905.2">
    <property type="protein sequence ID" value="ENSMUSP00000029905.2"/>
    <property type="gene ID" value="ENSMUSG00000028240.3"/>
</dbReference>
<dbReference type="GeneID" id="13122"/>
<dbReference type="KEGG" id="mmu:13122"/>
<dbReference type="UCSC" id="uc008rxk.1">
    <property type="organism name" value="mouse"/>
</dbReference>
<dbReference type="AGR" id="MGI:106091"/>
<dbReference type="CTD" id="1581"/>
<dbReference type="MGI" id="MGI:106091">
    <property type="gene designation" value="Cyp7a1"/>
</dbReference>
<dbReference type="VEuPathDB" id="HostDB:ENSMUSG00000028240"/>
<dbReference type="eggNOG" id="KOG0684">
    <property type="taxonomic scope" value="Eukaryota"/>
</dbReference>
<dbReference type="GeneTree" id="ENSGT00940000153141"/>
<dbReference type="HOGENOM" id="CLU_018012_1_3_1"/>
<dbReference type="InParanoid" id="Q64505"/>
<dbReference type="OMA" id="MFRTAHN"/>
<dbReference type="OrthoDB" id="6692864at2759"/>
<dbReference type="PhylomeDB" id="Q64505"/>
<dbReference type="TreeFam" id="TF105090"/>
<dbReference type="BRENDA" id="1.14.14.23">
    <property type="organism ID" value="3474"/>
</dbReference>
<dbReference type="Reactome" id="R-MMU-192105">
    <property type="pathway name" value="Synthesis of bile acids and bile salts"/>
</dbReference>
<dbReference type="Reactome" id="R-MMU-193368">
    <property type="pathway name" value="Synthesis of bile acids and bile salts via 7alpha-hydroxycholesterol"/>
</dbReference>
<dbReference type="Reactome" id="R-MMU-193807">
    <property type="pathway name" value="Synthesis of bile acids and bile salts via 27-hydroxycholesterol"/>
</dbReference>
<dbReference type="Reactome" id="R-MMU-211976">
    <property type="pathway name" value="Endogenous sterols"/>
</dbReference>
<dbReference type="UniPathway" id="UPA00221"/>
<dbReference type="UniPathway" id="UPA01058"/>
<dbReference type="BioGRID-ORCS" id="13122">
    <property type="hits" value="2 hits in 78 CRISPR screens"/>
</dbReference>
<dbReference type="ChiTaRS" id="Cyp7a1">
    <property type="organism name" value="mouse"/>
</dbReference>
<dbReference type="PRO" id="PR:Q64505"/>
<dbReference type="Proteomes" id="UP000000589">
    <property type="component" value="Chromosome 4"/>
</dbReference>
<dbReference type="RNAct" id="Q64505">
    <property type="molecule type" value="protein"/>
</dbReference>
<dbReference type="Bgee" id="ENSMUSG00000028240">
    <property type="expression patterns" value="Expressed in liver and 18 other cell types or tissues"/>
</dbReference>
<dbReference type="GO" id="GO:0005789">
    <property type="term" value="C:endoplasmic reticulum membrane"/>
    <property type="evidence" value="ECO:0007669"/>
    <property type="project" value="UniProtKB-SubCell"/>
</dbReference>
<dbReference type="GO" id="GO:0043231">
    <property type="term" value="C:intracellular membrane-bounded organelle"/>
    <property type="evidence" value="ECO:0000250"/>
    <property type="project" value="UniProtKB"/>
</dbReference>
<dbReference type="GO" id="GO:0033782">
    <property type="term" value="F:24S-hydroxycholesterol 7-alpha-hydroxylase activity"/>
    <property type="evidence" value="ECO:0007669"/>
    <property type="project" value="UniProtKB-EC"/>
</dbReference>
<dbReference type="GO" id="GO:0008123">
    <property type="term" value="F:cholesterol 7-alpha-monooxygenase activity"/>
    <property type="evidence" value="ECO:0000314"/>
    <property type="project" value="MGI"/>
</dbReference>
<dbReference type="GO" id="GO:0020037">
    <property type="term" value="F:heme binding"/>
    <property type="evidence" value="ECO:0007669"/>
    <property type="project" value="InterPro"/>
</dbReference>
<dbReference type="GO" id="GO:0005506">
    <property type="term" value="F:iron ion binding"/>
    <property type="evidence" value="ECO:0007669"/>
    <property type="project" value="InterPro"/>
</dbReference>
<dbReference type="GO" id="GO:0015721">
    <property type="term" value="P:bile acid and bile salt transport"/>
    <property type="evidence" value="ECO:0007669"/>
    <property type="project" value="Ensembl"/>
</dbReference>
<dbReference type="GO" id="GO:0006699">
    <property type="term" value="P:bile acid biosynthetic process"/>
    <property type="evidence" value="ECO:0000250"/>
    <property type="project" value="UniProtKB"/>
</dbReference>
<dbReference type="GO" id="GO:0071397">
    <property type="term" value="P:cellular response to cholesterol"/>
    <property type="evidence" value="ECO:0000250"/>
    <property type="project" value="UniProtKB"/>
</dbReference>
<dbReference type="GO" id="GO:0071333">
    <property type="term" value="P:cellular response to glucose stimulus"/>
    <property type="evidence" value="ECO:0000250"/>
    <property type="project" value="UniProtKB"/>
</dbReference>
<dbReference type="GO" id="GO:0006707">
    <property type="term" value="P:cholesterol catabolic process"/>
    <property type="evidence" value="ECO:0000314"/>
    <property type="project" value="MGI"/>
</dbReference>
<dbReference type="GO" id="GO:0042632">
    <property type="term" value="P:cholesterol homeostasis"/>
    <property type="evidence" value="ECO:0000250"/>
    <property type="project" value="UniProtKB"/>
</dbReference>
<dbReference type="GO" id="GO:0032966">
    <property type="term" value="P:negative regulation of collagen biosynthetic process"/>
    <property type="evidence" value="ECO:0007669"/>
    <property type="project" value="Ensembl"/>
</dbReference>
<dbReference type="GO" id="GO:0045717">
    <property type="term" value="P:negative regulation of fatty acid biosynthetic process"/>
    <property type="evidence" value="ECO:0007669"/>
    <property type="project" value="Ensembl"/>
</dbReference>
<dbReference type="GO" id="GO:0070859">
    <property type="term" value="P:positive regulation of bile acid biosynthetic process"/>
    <property type="evidence" value="ECO:0000304"/>
    <property type="project" value="BHF-UCL"/>
</dbReference>
<dbReference type="GO" id="GO:0045542">
    <property type="term" value="P:positive regulation of cholesterol biosynthetic process"/>
    <property type="evidence" value="ECO:0007669"/>
    <property type="project" value="Ensembl"/>
</dbReference>
<dbReference type="GO" id="GO:0070857">
    <property type="term" value="P:regulation of bile acid biosynthetic process"/>
    <property type="evidence" value="ECO:0000250"/>
    <property type="project" value="UniProtKB"/>
</dbReference>
<dbReference type="GO" id="GO:0045471">
    <property type="term" value="P:response to ethanol"/>
    <property type="evidence" value="ECO:0007669"/>
    <property type="project" value="Ensembl"/>
</dbReference>
<dbReference type="CDD" id="cd20631">
    <property type="entry name" value="CYP7A1"/>
    <property type="match status" value="1"/>
</dbReference>
<dbReference type="FunFam" id="1.10.630.10:FF:000034">
    <property type="entry name" value="Cholesterol 7-alpha-monooxygenase"/>
    <property type="match status" value="1"/>
</dbReference>
<dbReference type="Gene3D" id="1.10.630.10">
    <property type="entry name" value="Cytochrome P450"/>
    <property type="match status" value="1"/>
</dbReference>
<dbReference type="InterPro" id="IPR030681">
    <property type="entry name" value="Cholesterol_7a_monooxygenase"/>
</dbReference>
<dbReference type="InterPro" id="IPR050529">
    <property type="entry name" value="CYP450_sterol_14alpha_dmase"/>
</dbReference>
<dbReference type="InterPro" id="IPR001128">
    <property type="entry name" value="Cyt_P450"/>
</dbReference>
<dbReference type="InterPro" id="IPR017972">
    <property type="entry name" value="Cyt_P450_CS"/>
</dbReference>
<dbReference type="InterPro" id="IPR024204">
    <property type="entry name" value="Cyt_P450_CYP7A1-type"/>
</dbReference>
<dbReference type="InterPro" id="IPR002403">
    <property type="entry name" value="Cyt_P450_E_grp-IV"/>
</dbReference>
<dbReference type="InterPro" id="IPR036396">
    <property type="entry name" value="Cyt_P450_sf"/>
</dbReference>
<dbReference type="PANTHER" id="PTHR24304:SF1">
    <property type="entry name" value="CYTOCHROME P450 7A1"/>
    <property type="match status" value="1"/>
</dbReference>
<dbReference type="PANTHER" id="PTHR24304">
    <property type="entry name" value="CYTOCHROME P450 FAMILY 7"/>
    <property type="match status" value="1"/>
</dbReference>
<dbReference type="Pfam" id="PF00067">
    <property type="entry name" value="p450"/>
    <property type="match status" value="1"/>
</dbReference>
<dbReference type="PIRSF" id="PIRSF500625">
    <property type="entry name" value="Cytochrome_CYP7A1"/>
    <property type="match status" value="1"/>
</dbReference>
<dbReference type="PIRSF" id="PIRSF000047">
    <property type="entry name" value="Cytochrome_CYPVIIA1"/>
    <property type="match status" value="1"/>
</dbReference>
<dbReference type="PRINTS" id="PR00465">
    <property type="entry name" value="EP450IV"/>
</dbReference>
<dbReference type="SUPFAM" id="SSF48264">
    <property type="entry name" value="Cytochrome P450"/>
    <property type="match status" value="1"/>
</dbReference>
<dbReference type="PROSITE" id="PS00086">
    <property type="entry name" value="CYTOCHROME_P450"/>
    <property type="match status" value="1"/>
</dbReference>
<feature type="chain" id="PRO_0000051902" description="Cytochrome P450 7A1">
    <location>
        <begin position="1"/>
        <end position="503"/>
    </location>
</feature>
<feature type="transmembrane region" description="Helical" evidence="3">
    <location>
        <begin position="4"/>
        <end position="24"/>
    </location>
</feature>
<feature type="binding site" description="axial binding residue" evidence="2">
    <location>
        <position position="444"/>
    </location>
    <ligand>
        <name>heme</name>
        <dbReference type="ChEBI" id="CHEBI:30413"/>
    </ligand>
    <ligandPart>
        <name>Fe</name>
        <dbReference type="ChEBI" id="CHEBI:18248"/>
    </ligandPart>
</feature>
<feature type="sequence conflict" description="In Ref. 1; AAA68867." evidence="8" ref="1">
    <original>S</original>
    <variation>T</variation>
    <location>
        <position position="197"/>
    </location>
</feature>
<feature type="sequence conflict" description="In Ref. 1; AAA68867." evidence="8" ref="1">
    <original>F</original>
    <variation>L</variation>
    <location>
        <position position="228"/>
    </location>
</feature>
<feature type="sequence conflict" description="In Ref. 1; AAA68867." evidence="8" ref="1">
    <original>A</original>
    <variation>S</variation>
    <location>
        <position position="318"/>
    </location>
</feature>
<name>CP7A1_MOUSE</name>
<comment type="function">
    <text evidence="2 9">A cytochrome P450 monooxygenase involved in the metabolism of endogenous cholesterol and its oxygenated derivatives (oxysterols) (By similarity). Mechanistically, uses molecular oxygen inserting one oxygen atom into a substrate, and reducing the second into a water molecule, with two electrons provided by NADPH via cytochrome P450 reductase (CPR; NADPH-ferrihemoprotein reductase) (By similarity). Functions as a critical regulatory enzyme of bile acid biosynthesis and cholesterol homeostasis. Catalyzes the hydroxylation of carbon hydrogen bond at 7-alpha position of cholesterol, a rate-limiting step in cholesterol catabolism and bile acid biosynthesis (Probable). 7-alpha hydroxylates several oxysterols, including 4beta-hydroxycholesterol and 24-hydroxycholesterol. Catalyzes the oxidation of the 7,8 double bond of 7-dehydrocholesterol and lathosterol with direct and predominant formation of the 7-keto derivatives (By similarity).</text>
</comment>
<comment type="catalytic activity">
    <reaction evidence="2">
        <text>cholesterol + reduced [NADPH--hemoprotein reductase] + O2 = 7alpha-hydroxycholesterol + oxidized [NADPH--hemoprotein reductase] + H2O + H(+)</text>
        <dbReference type="Rhea" id="RHEA:21812"/>
        <dbReference type="Rhea" id="RHEA-COMP:11964"/>
        <dbReference type="Rhea" id="RHEA-COMP:11965"/>
        <dbReference type="ChEBI" id="CHEBI:15377"/>
        <dbReference type="ChEBI" id="CHEBI:15378"/>
        <dbReference type="ChEBI" id="CHEBI:15379"/>
        <dbReference type="ChEBI" id="CHEBI:16113"/>
        <dbReference type="ChEBI" id="CHEBI:17500"/>
        <dbReference type="ChEBI" id="CHEBI:57618"/>
        <dbReference type="ChEBI" id="CHEBI:58210"/>
        <dbReference type="EC" id="1.14.14.23"/>
    </reaction>
    <physiologicalReaction direction="left-to-right" evidence="2">
        <dbReference type="Rhea" id="RHEA:21813"/>
    </physiologicalReaction>
</comment>
<comment type="catalytic activity">
    <reaction evidence="2">
        <text>4beta-hydroxycholesterol + reduced [NADPH--hemoprotein reductase] + O2 = 4beta,7alpha-dihydroxycholesterol + oxidized [NADPH--hemoprotein reductase] + H2O + H(+)</text>
        <dbReference type="Rhea" id="RHEA:46120"/>
        <dbReference type="Rhea" id="RHEA-COMP:11964"/>
        <dbReference type="Rhea" id="RHEA-COMP:11965"/>
        <dbReference type="ChEBI" id="CHEBI:15377"/>
        <dbReference type="ChEBI" id="CHEBI:15378"/>
        <dbReference type="ChEBI" id="CHEBI:15379"/>
        <dbReference type="ChEBI" id="CHEBI:57618"/>
        <dbReference type="ChEBI" id="CHEBI:58210"/>
        <dbReference type="ChEBI" id="CHEBI:85778"/>
        <dbReference type="ChEBI" id="CHEBI:85779"/>
    </reaction>
    <physiologicalReaction direction="left-to-right" evidence="2">
        <dbReference type="Rhea" id="RHEA:46121"/>
    </physiologicalReaction>
</comment>
<comment type="catalytic activity">
    <reaction evidence="2">
        <text>lathosterol + reduced [NADPH--hemoprotein reductase] + O2 = 7alpha,8alpha-epoxy-5alpha-cholestan-3beta-ol + oxidized [NADPH--hemoprotein reductase] + H2O + H(+)</text>
        <dbReference type="Rhea" id="RHEA:53256"/>
        <dbReference type="Rhea" id="RHEA-COMP:11964"/>
        <dbReference type="Rhea" id="RHEA-COMP:11965"/>
        <dbReference type="ChEBI" id="CHEBI:15377"/>
        <dbReference type="ChEBI" id="CHEBI:15378"/>
        <dbReference type="ChEBI" id="CHEBI:15379"/>
        <dbReference type="ChEBI" id="CHEBI:17168"/>
        <dbReference type="ChEBI" id="CHEBI:57618"/>
        <dbReference type="ChEBI" id="CHEBI:58210"/>
        <dbReference type="ChEBI" id="CHEBI:137063"/>
    </reaction>
    <physiologicalReaction direction="left-to-right" evidence="2">
        <dbReference type="Rhea" id="RHEA:53257"/>
    </physiologicalReaction>
</comment>
<comment type="catalytic activity">
    <reaction evidence="2">
        <text>lathosterol + reduced [NADPH--hemoprotein reductase] + O2 = 5alpha-cholestan-7-oxo-3beta-ol + oxidized [NADPH--hemoprotein reductase] + H2O + H(+)</text>
        <dbReference type="Rhea" id="RHEA:53252"/>
        <dbReference type="Rhea" id="RHEA-COMP:11964"/>
        <dbReference type="Rhea" id="RHEA-COMP:11965"/>
        <dbReference type="ChEBI" id="CHEBI:15377"/>
        <dbReference type="ChEBI" id="CHEBI:15378"/>
        <dbReference type="ChEBI" id="CHEBI:15379"/>
        <dbReference type="ChEBI" id="CHEBI:17168"/>
        <dbReference type="ChEBI" id="CHEBI:57618"/>
        <dbReference type="ChEBI" id="CHEBI:58210"/>
        <dbReference type="ChEBI" id="CHEBI:137062"/>
    </reaction>
    <physiologicalReaction direction="left-to-right" evidence="2">
        <dbReference type="Rhea" id="RHEA:53253"/>
    </physiologicalReaction>
</comment>
<comment type="catalytic activity">
    <reaction evidence="2">
        <text>7-dehydrocholesterol + reduced [NADPH--hemoprotein reductase] + O2 = 7-oxocholesterol + oxidized [NADPH--hemoprotein reductase] + H2O + H(+)</text>
        <dbReference type="Rhea" id="RHEA:53248"/>
        <dbReference type="Rhea" id="RHEA-COMP:11964"/>
        <dbReference type="Rhea" id="RHEA-COMP:11965"/>
        <dbReference type="ChEBI" id="CHEBI:15377"/>
        <dbReference type="ChEBI" id="CHEBI:15378"/>
        <dbReference type="ChEBI" id="CHEBI:15379"/>
        <dbReference type="ChEBI" id="CHEBI:17759"/>
        <dbReference type="ChEBI" id="CHEBI:57618"/>
        <dbReference type="ChEBI" id="CHEBI:58210"/>
        <dbReference type="ChEBI" id="CHEBI:64294"/>
    </reaction>
    <physiologicalReaction direction="left-to-right" evidence="2">
        <dbReference type="Rhea" id="RHEA:53249"/>
    </physiologicalReaction>
</comment>
<comment type="catalytic activity">
    <reaction evidence="2">
        <text>(24S)-hydroxycholesterol + reduced [NADPH--hemoprotein reductase] + O2 = (24S)-7alpha-dihydroxycholesterol + oxidized [NADPH--hemoprotein reductase] + H2O + H(+)</text>
        <dbReference type="Rhea" id="RHEA:46124"/>
        <dbReference type="Rhea" id="RHEA-COMP:11964"/>
        <dbReference type="Rhea" id="RHEA-COMP:11965"/>
        <dbReference type="ChEBI" id="CHEBI:15377"/>
        <dbReference type="ChEBI" id="CHEBI:15378"/>
        <dbReference type="ChEBI" id="CHEBI:15379"/>
        <dbReference type="ChEBI" id="CHEBI:34310"/>
        <dbReference type="ChEBI" id="CHEBI:37640"/>
        <dbReference type="ChEBI" id="CHEBI:57618"/>
        <dbReference type="ChEBI" id="CHEBI:58210"/>
        <dbReference type="EC" id="1.14.14.26"/>
    </reaction>
    <physiologicalReaction direction="left-to-right" evidence="2">
        <dbReference type="Rhea" id="RHEA:46125"/>
    </physiologicalReaction>
</comment>
<comment type="catalytic activity">
    <reaction evidence="2">
        <text>(24R)-hydroxycholesterol + reduced [NADPH--hemoprotein reductase] + O2 = (24R)-7alpha-dihydroxycholesterol + oxidized [NADPH--hemoprotein reductase] + H2O + H(+)</text>
        <dbReference type="Rhea" id="RHEA:16093"/>
        <dbReference type="Rhea" id="RHEA-COMP:11964"/>
        <dbReference type="Rhea" id="RHEA-COMP:11965"/>
        <dbReference type="ChEBI" id="CHEBI:15377"/>
        <dbReference type="ChEBI" id="CHEBI:15378"/>
        <dbReference type="ChEBI" id="CHEBI:15379"/>
        <dbReference type="ChEBI" id="CHEBI:50516"/>
        <dbReference type="ChEBI" id="CHEBI:50518"/>
        <dbReference type="ChEBI" id="CHEBI:57618"/>
        <dbReference type="ChEBI" id="CHEBI:58210"/>
    </reaction>
    <physiologicalReaction direction="left-to-right" evidence="2">
        <dbReference type="Rhea" id="RHEA:16094"/>
    </physiologicalReaction>
</comment>
<comment type="cofactor">
    <cofactor evidence="2">
        <name>heme</name>
        <dbReference type="ChEBI" id="CHEBI:30413"/>
    </cofactor>
</comment>
<comment type="pathway">
    <text evidence="4">Lipid metabolism; bile acid biosynthesis.</text>
</comment>
<comment type="pathway">
    <text evidence="2">Steroid metabolism; cholesterol degradation.</text>
</comment>
<comment type="subcellular location">
    <subcellularLocation>
        <location evidence="2">Endoplasmic reticulum membrane</location>
        <topology evidence="2">Single-pass membrane protein</topology>
    </subcellularLocation>
    <subcellularLocation>
        <location evidence="2">Microsome membrane</location>
        <topology evidence="2">Single-pass membrane protein</topology>
    </subcellularLocation>
</comment>
<comment type="induction">
    <text evidence="4 5">Up-regulated by fasting, returns to ground state upon feeding. Up-regulated by experimentally induced diabetes. Down-regulated by insulin treatment.</text>
</comment>
<comment type="similarity">
    <text evidence="8">Belongs to the cytochrome P450 family.</text>
</comment>
<organism>
    <name type="scientific">Mus musculus</name>
    <name type="common">Mouse</name>
    <dbReference type="NCBI Taxonomy" id="10090"/>
    <lineage>
        <taxon>Eukaryota</taxon>
        <taxon>Metazoa</taxon>
        <taxon>Chordata</taxon>
        <taxon>Craniata</taxon>
        <taxon>Vertebrata</taxon>
        <taxon>Euteleostomi</taxon>
        <taxon>Mammalia</taxon>
        <taxon>Eutheria</taxon>
        <taxon>Euarchontoglires</taxon>
        <taxon>Glires</taxon>
        <taxon>Rodentia</taxon>
        <taxon>Myomorpha</taxon>
        <taxon>Muroidea</taxon>
        <taxon>Muridae</taxon>
        <taxon>Murinae</taxon>
        <taxon>Mus</taxon>
        <taxon>Mus</taxon>
    </lineage>
</organism>